<comment type="function">
    <text evidence="1">May help in the organization of the PsaE and PsaF subunits.</text>
</comment>
<comment type="subcellular location">
    <subcellularLocation>
        <location evidence="1">Plastid</location>
        <location evidence="1">Chloroplast thylakoid membrane</location>
        <topology evidence="1">Single-pass membrane protein</topology>
    </subcellularLocation>
</comment>
<comment type="similarity">
    <text evidence="1">Belongs to the PsaJ family.</text>
</comment>
<protein>
    <recommendedName>
        <fullName evidence="1">Photosystem I reaction center subunit IX</fullName>
    </recommendedName>
    <alternativeName>
        <fullName evidence="1">PSI-J</fullName>
    </alternativeName>
</protein>
<sequence length="42" mass="4676">MQDIKTYLSTAPVLAALSLGFLAGLLIEINRFFPDALIFPFF</sequence>
<dbReference type="EMBL" id="AP009377">
    <property type="protein sequence ID" value="BAG16654.1"/>
    <property type="molecule type" value="Genomic_DNA"/>
</dbReference>
<dbReference type="RefSeq" id="YP_001806656.1">
    <property type="nucleotide sequence ID" value="NC_010548.1"/>
</dbReference>
<dbReference type="SMR" id="B1VKE3"/>
<dbReference type="GeneID" id="6166616"/>
<dbReference type="KEGG" id="cjf:6166616"/>
<dbReference type="GO" id="GO:0009535">
    <property type="term" value="C:chloroplast thylakoid membrane"/>
    <property type="evidence" value="ECO:0007669"/>
    <property type="project" value="UniProtKB-SubCell"/>
</dbReference>
<dbReference type="GO" id="GO:0009522">
    <property type="term" value="C:photosystem I"/>
    <property type="evidence" value="ECO:0007669"/>
    <property type="project" value="UniProtKB-KW"/>
</dbReference>
<dbReference type="GO" id="GO:0015979">
    <property type="term" value="P:photosynthesis"/>
    <property type="evidence" value="ECO:0007669"/>
    <property type="project" value="UniProtKB-UniRule"/>
</dbReference>
<dbReference type="Gene3D" id="1.20.5.510">
    <property type="entry name" value="Single helix bin"/>
    <property type="match status" value="1"/>
</dbReference>
<dbReference type="HAMAP" id="MF_00522">
    <property type="entry name" value="PSI_PsaJ"/>
    <property type="match status" value="1"/>
</dbReference>
<dbReference type="InterPro" id="IPR002615">
    <property type="entry name" value="PSI_PsaJ"/>
</dbReference>
<dbReference type="InterPro" id="IPR036062">
    <property type="entry name" value="PSI_PsaJ_sf"/>
</dbReference>
<dbReference type="PANTHER" id="PTHR36082">
    <property type="match status" value="1"/>
</dbReference>
<dbReference type="PANTHER" id="PTHR36082:SF2">
    <property type="entry name" value="PHOTOSYSTEM I REACTION CENTER SUBUNIT IX"/>
    <property type="match status" value="1"/>
</dbReference>
<dbReference type="Pfam" id="PF01701">
    <property type="entry name" value="PSI_PsaJ"/>
    <property type="match status" value="1"/>
</dbReference>
<dbReference type="SUPFAM" id="SSF81544">
    <property type="entry name" value="Subunit IX of photosystem I reaction centre, PsaJ"/>
    <property type="match status" value="1"/>
</dbReference>
<accession>B1VKE3</accession>
<evidence type="ECO:0000255" key="1">
    <source>
        <dbReference type="HAMAP-Rule" id="MF_00522"/>
    </source>
</evidence>
<reference key="1">
    <citation type="journal article" date="2008" name="BMC Plant Biol.">
        <title>Complete nucleotide sequence of the Cryptomeria japonica D. Don. chloroplast genome and comparative chloroplast genomics: diversified genomic structure of coniferous species.</title>
        <authorList>
            <person name="Hirao T."/>
            <person name="Watanabe A."/>
            <person name="Kurita M."/>
            <person name="Kondo T."/>
            <person name="Takata K."/>
        </authorList>
    </citation>
    <scope>NUCLEOTIDE SEQUENCE [LARGE SCALE GENOMIC DNA]</scope>
</reference>
<geneLocation type="chloroplast"/>
<organism>
    <name type="scientific">Cryptomeria japonica</name>
    <name type="common">Japanese cedar</name>
    <name type="synonym">Cupressus japonica</name>
    <dbReference type="NCBI Taxonomy" id="3369"/>
    <lineage>
        <taxon>Eukaryota</taxon>
        <taxon>Viridiplantae</taxon>
        <taxon>Streptophyta</taxon>
        <taxon>Embryophyta</taxon>
        <taxon>Tracheophyta</taxon>
        <taxon>Spermatophyta</taxon>
        <taxon>Pinopsida</taxon>
        <taxon>Pinidae</taxon>
        <taxon>Conifers II</taxon>
        <taxon>Cupressales</taxon>
        <taxon>Cupressaceae</taxon>
        <taxon>Cryptomeria</taxon>
    </lineage>
</organism>
<name>PSAJ_CRYJA</name>
<feature type="chain" id="PRO_0000354139" description="Photosystem I reaction center subunit IX">
    <location>
        <begin position="1"/>
        <end position="42"/>
    </location>
</feature>
<feature type="transmembrane region" description="Helical" evidence="1">
    <location>
        <begin position="7"/>
        <end position="27"/>
    </location>
</feature>
<keyword id="KW-0150">Chloroplast</keyword>
<keyword id="KW-0472">Membrane</keyword>
<keyword id="KW-0602">Photosynthesis</keyword>
<keyword id="KW-0603">Photosystem I</keyword>
<keyword id="KW-0934">Plastid</keyword>
<keyword id="KW-0793">Thylakoid</keyword>
<keyword id="KW-0812">Transmembrane</keyword>
<keyword id="KW-1133">Transmembrane helix</keyword>
<proteinExistence type="inferred from homology"/>
<gene>
    <name evidence="1" type="primary">psaJ</name>
</gene>